<proteinExistence type="inferred from homology"/>
<comment type="function">
    <text evidence="1">Produces ATP from ADP in the presence of a proton gradient across the membrane. The alpha chain is a regulatory subunit.</text>
</comment>
<comment type="catalytic activity">
    <reaction evidence="1">
        <text>ATP + H2O + 4 H(+)(in) = ADP + phosphate + 5 H(+)(out)</text>
        <dbReference type="Rhea" id="RHEA:57720"/>
        <dbReference type="ChEBI" id="CHEBI:15377"/>
        <dbReference type="ChEBI" id="CHEBI:15378"/>
        <dbReference type="ChEBI" id="CHEBI:30616"/>
        <dbReference type="ChEBI" id="CHEBI:43474"/>
        <dbReference type="ChEBI" id="CHEBI:456216"/>
        <dbReference type="EC" id="7.1.2.2"/>
    </reaction>
</comment>
<comment type="subunit">
    <text evidence="1">F-type ATPases have 2 components, CF(1) - the catalytic core - and CF(0) - the membrane proton channel. CF(1) has five subunits: alpha(3), beta(3), gamma(1), delta(1), epsilon(1). CF(0) has three main subunits: a(1), b(2) and c(9-12). The alpha and beta chains form an alternating ring which encloses part of the gamma chain. CF(1) is attached to CF(0) by a central stalk formed by the gamma and epsilon chains, while a peripheral stalk is formed by the delta and b chains.</text>
</comment>
<comment type="subcellular location">
    <subcellularLocation>
        <location evidence="1">Cell inner membrane</location>
        <topology evidence="1">Peripheral membrane protein</topology>
    </subcellularLocation>
</comment>
<comment type="similarity">
    <text evidence="1">Belongs to the ATPase alpha/beta chains family.</text>
</comment>
<keyword id="KW-0066">ATP synthesis</keyword>
<keyword id="KW-0067">ATP-binding</keyword>
<keyword id="KW-0997">Cell inner membrane</keyword>
<keyword id="KW-1003">Cell membrane</keyword>
<keyword id="KW-0139">CF(1)</keyword>
<keyword id="KW-0375">Hydrogen ion transport</keyword>
<keyword id="KW-0406">Ion transport</keyword>
<keyword id="KW-0472">Membrane</keyword>
<keyword id="KW-0547">Nucleotide-binding</keyword>
<keyword id="KW-1185">Reference proteome</keyword>
<keyword id="KW-1278">Translocase</keyword>
<keyword id="KW-0813">Transport</keyword>
<accession>A9GHR6</accession>
<evidence type="ECO:0000255" key="1">
    <source>
        <dbReference type="HAMAP-Rule" id="MF_01346"/>
    </source>
</evidence>
<evidence type="ECO:0000256" key="2">
    <source>
        <dbReference type="SAM" id="MobiDB-lite"/>
    </source>
</evidence>
<name>ATPA_SORC5</name>
<organism>
    <name type="scientific">Sorangium cellulosum (strain So ce56)</name>
    <name type="common">Polyangium cellulosum (strain So ce56)</name>
    <dbReference type="NCBI Taxonomy" id="448385"/>
    <lineage>
        <taxon>Bacteria</taxon>
        <taxon>Pseudomonadati</taxon>
        <taxon>Myxococcota</taxon>
        <taxon>Polyangia</taxon>
        <taxon>Polyangiales</taxon>
        <taxon>Polyangiaceae</taxon>
        <taxon>Sorangium</taxon>
    </lineage>
</organism>
<dbReference type="EC" id="7.1.2.2" evidence="1"/>
<dbReference type="EMBL" id="AM746676">
    <property type="protein sequence ID" value="CAN99534.1"/>
    <property type="molecule type" value="Genomic_DNA"/>
</dbReference>
<dbReference type="RefSeq" id="WP_012241969.1">
    <property type="nucleotide sequence ID" value="NC_010162.1"/>
</dbReference>
<dbReference type="SMR" id="A9GHR6"/>
<dbReference type="STRING" id="448385.sce9361"/>
<dbReference type="KEGG" id="scl:sce9361"/>
<dbReference type="eggNOG" id="COG0056">
    <property type="taxonomic scope" value="Bacteria"/>
</dbReference>
<dbReference type="HOGENOM" id="CLU_010091_2_1_7"/>
<dbReference type="OrthoDB" id="9803053at2"/>
<dbReference type="BioCyc" id="SCEL448385:SCE_RS47865-MONOMER"/>
<dbReference type="Proteomes" id="UP000002139">
    <property type="component" value="Chromosome"/>
</dbReference>
<dbReference type="GO" id="GO:0005886">
    <property type="term" value="C:plasma membrane"/>
    <property type="evidence" value="ECO:0007669"/>
    <property type="project" value="UniProtKB-SubCell"/>
</dbReference>
<dbReference type="GO" id="GO:0045259">
    <property type="term" value="C:proton-transporting ATP synthase complex"/>
    <property type="evidence" value="ECO:0007669"/>
    <property type="project" value="UniProtKB-KW"/>
</dbReference>
<dbReference type="GO" id="GO:0043531">
    <property type="term" value="F:ADP binding"/>
    <property type="evidence" value="ECO:0007669"/>
    <property type="project" value="TreeGrafter"/>
</dbReference>
<dbReference type="GO" id="GO:0005524">
    <property type="term" value="F:ATP binding"/>
    <property type="evidence" value="ECO:0007669"/>
    <property type="project" value="UniProtKB-UniRule"/>
</dbReference>
<dbReference type="GO" id="GO:0046933">
    <property type="term" value="F:proton-transporting ATP synthase activity, rotational mechanism"/>
    <property type="evidence" value="ECO:0007669"/>
    <property type="project" value="UniProtKB-UniRule"/>
</dbReference>
<dbReference type="CDD" id="cd18113">
    <property type="entry name" value="ATP-synt_F1_alpha_C"/>
    <property type="match status" value="1"/>
</dbReference>
<dbReference type="CDD" id="cd18116">
    <property type="entry name" value="ATP-synt_F1_alpha_N"/>
    <property type="match status" value="1"/>
</dbReference>
<dbReference type="CDD" id="cd01132">
    <property type="entry name" value="F1-ATPase_alpha_CD"/>
    <property type="match status" value="1"/>
</dbReference>
<dbReference type="FunFam" id="1.20.150.20:FF:000001">
    <property type="entry name" value="ATP synthase subunit alpha"/>
    <property type="match status" value="1"/>
</dbReference>
<dbReference type="FunFam" id="2.40.30.20:FF:000001">
    <property type="entry name" value="ATP synthase subunit alpha"/>
    <property type="match status" value="1"/>
</dbReference>
<dbReference type="FunFam" id="3.40.50.300:FF:004039">
    <property type="entry name" value="ATP synthase subunit alpha, mitochondrial"/>
    <property type="match status" value="1"/>
</dbReference>
<dbReference type="Gene3D" id="2.40.30.20">
    <property type="match status" value="1"/>
</dbReference>
<dbReference type="Gene3D" id="1.20.150.20">
    <property type="entry name" value="ATP synthase alpha/beta chain, C-terminal domain"/>
    <property type="match status" value="1"/>
</dbReference>
<dbReference type="Gene3D" id="3.40.50.300">
    <property type="entry name" value="P-loop containing nucleotide triphosphate hydrolases"/>
    <property type="match status" value="1"/>
</dbReference>
<dbReference type="HAMAP" id="MF_01346">
    <property type="entry name" value="ATP_synth_alpha_bact"/>
    <property type="match status" value="1"/>
</dbReference>
<dbReference type="InterPro" id="IPR023366">
    <property type="entry name" value="ATP_synth_asu-like_sf"/>
</dbReference>
<dbReference type="InterPro" id="IPR000793">
    <property type="entry name" value="ATP_synth_asu_C"/>
</dbReference>
<dbReference type="InterPro" id="IPR038376">
    <property type="entry name" value="ATP_synth_asu_C_sf"/>
</dbReference>
<dbReference type="InterPro" id="IPR033732">
    <property type="entry name" value="ATP_synth_F1_a_nt-bd_dom"/>
</dbReference>
<dbReference type="InterPro" id="IPR005294">
    <property type="entry name" value="ATP_synth_F1_asu"/>
</dbReference>
<dbReference type="InterPro" id="IPR020003">
    <property type="entry name" value="ATPase_a/bsu_AS"/>
</dbReference>
<dbReference type="InterPro" id="IPR004100">
    <property type="entry name" value="ATPase_F1/V1/A1_a/bsu_N"/>
</dbReference>
<dbReference type="InterPro" id="IPR036121">
    <property type="entry name" value="ATPase_F1/V1/A1_a/bsu_N_sf"/>
</dbReference>
<dbReference type="InterPro" id="IPR000194">
    <property type="entry name" value="ATPase_F1/V1/A1_a/bsu_nucl-bd"/>
</dbReference>
<dbReference type="InterPro" id="IPR027417">
    <property type="entry name" value="P-loop_NTPase"/>
</dbReference>
<dbReference type="NCBIfam" id="TIGR00962">
    <property type="entry name" value="atpA"/>
    <property type="match status" value="1"/>
</dbReference>
<dbReference type="PANTHER" id="PTHR48082">
    <property type="entry name" value="ATP SYNTHASE SUBUNIT ALPHA, MITOCHONDRIAL"/>
    <property type="match status" value="1"/>
</dbReference>
<dbReference type="PANTHER" id="PTHR48082:SF2">
    <property type="entry name" value="ATP SYNTHASE SUBUNIT ALPHA, MITOCHONDRIAL"/>
    <property type="match status" value="1"/>
</dbReference>
<dbReference type="Pfam" id="PF00006">
    <property type="entry name" value="ATP-synt_ab"/>
    <property type="match status" value="2"/>
</dbReference>
<dbReference type="Pfam" id="PF00306">
    <property type="entry name" value="ATP-synt_ab_C"/>
    <property type="match status" value="1"/>
</dbReference>
<dbReference type="Pfam" id="PF02874">
    <property type="entry name" value="ATP-synt_ab_N"/>
    <property type="match status" value="1"/>
</dbReference>
<dbReference type="SUPFAM" id="SSF47917">
    <property type="entry name" value="C-terminal domain of alpha and beta subunits of F1 ATP synthase"/>
    <property type="match status" value="1"/>
</dbReference>
<dbReference type="SUPFAM" id="SSF50615">
    <property type="entry name" value="N-terminal domain of alpha and beta subunits of F1 ATP synthase"/>
    <property type="match status" value="1"/>
</dbReference>
<dbReference type="SUPFAM" id="SSF52540">
    <property type="entry name" value="P-loop containing nucleoside triphosphate hydrolases"/>
    <property type="match status" value="2"/>
</dbReference>
<dbReference type="PROSITE" id="PS00152">
    <property type="entry name" value="ATPASE_ALPHA_BETA"/>
    <property type="match status" value="1"/>
</dbReference>
<feature type="chain" id="PRO_1000086898" description="ATP synthase subunit alpha">
    <location>
        <begin position="1"/>
        <end position="630"/>
    </location>
</feature>
<feature type="region of interest" description="Disordered" evidence="2">
    <location>
        <begin position="592"/>
        <end position="630"/>
    </location>
</feature>
<feature type="compositionally biased region" description="Acidic residues" evidence="2">
    <location>
        <begin position="599"/>
        <end position="611"/>
    </location>
</feature>
<feature type="binding site" evidence="1">
    <location>
        <begin position="173"/>
        <end position="180"/>
    </location>
    <ligand>
        <name>ATP</name>
        <dbReference type="ChEBI" id="CHEBI:30616"/>
    </ligand>
</feature>
<feature type="site" description="Required for activity" evidence="1">
    <location>
        <position position="450"/>
    </location>
</feature>
<sequence>MQLRAEEISQIIKKQIQNIDKAAQVTETGTVLTVGDGIARVHGLSRAMAGELVEFTGSEGGSLMGLVLNLEQDNVGAAIFGDTSSIKEGDAVKRTGRIMEVPVGEATLGRVVNALGMPIDGKGPLETKERRRVEVKAPGIIQRQPVTEPMQTGIKAIDAMIPVGRGQRELIIGDRQTGKTAVAVDAIINQKGKGVICVYVAIGQKLSTVRQVVDKLDAHGALEYTIIVAATASETAPLQFIAPYTGVTIGEYFRDSGRHALCIYDDLSKQAVAYRQLSLLLRRPPGREAYPGDVFYLHSRLLERAAKMADVFYVVSKGTKIEGGDASYRGIDGKAHVGAHGMHSAKDSLWKTIDGALFEKLEQARKDEKKDEIKKLEQQLSDKAKASDYEIVRDPKSGGSLTALPVIETQAGDVSAYIPTNVISITDGQIFLEADLFYSGVRPAINVGISVSRVGGNAQIKAMKSIAGTLRLDLAQYRAMAAFSQFASDLDAKTRAQLERGARLTEILKQGQYVPLAVEKQILIIYAGTQGLLDSLPVSSLSRFEEELYKFVEAKHPQIFTDIREKKVLDDDLKSRMTKAIDTFKKRFAVEAGGASTAADEDGAGDDEEEAPAPKAKSKNAKSASKAKEK</sequence>
<gene>
    <name evidence="1" type="primary">atpA</name>
    <name type="ordered locus">sce9361</name>
</gene>
<reference key="1">
    <citation type="journal article" date="2007" name="Nat. Biotechnol.">
        <title>Complete genome sequence of the myxobacterium Sorangium cellulosum.</title>
        <authorList>
            <person name="Schneiker S."/>
            <person name="Perlova O."/>
            <person name="Kaiser O."/>
            <person name="Gerth K."/>
            <person name="Alici A."/>
            <person name="Altmeyer M.O."/>
            <person name="Bartels D."/>
            <person name="Bekel T."/>
            <person name="Beyer S."/>
            <person name="Bode E."/>
            <person name="Bode H.B."/>
            <person name="Bolten C.J."/>
            <person name="Choudhuri J.V."/>
            <person name="Doss S."/>
            <person name="Elnakady Y.A."/>
            <person name="Frank B."/>
            <person name="Gaigalat L."/>
            <person name="Goesmann A."/>
            <person name="Groeger C."/>
            <person name="Gross F."/>
            <person name="Jelsbak L."/>
            <person name="Jelsbak L."/>
            <person name="Kalinowski J."/>
            <person name="Kegler C."/>
            <person name="Knauber T."/>
            <person name="Konietzny S."/>
            <person name="Kopp M."/>
            <person name="Krause L."/>
            <person name="Krug D."/>
            <person name="Linke B."/>
            <person name="Mahmud T."/>
            <person name="Martinez-Arias R."/>
            <person name="McHardy A.C."/>
            <person name="Merai M."/>
            <person name="Meyer F."/>
            <person name="Mormann S."/>
            <person name="Munoz-Dorado J."/>
            <person name="Perez J."/>
            <person name="Pradella S."/>
            <person name="Rachid S."/>
            <person name="Raddatz G."/>
            <person name="Rosenau F."/>
            <person name="Rueckert C."/>
            <person name="Sasse F."/>
            <person name="Scharfe M."/>
            <person name="Schuster S.C."/>
            <person name="Suen G."/>
            <person name="Treuner-Lange A."/>
            <person name="Velicer G.J."/>
            <person name="Vorholter F.-J."/>
            <person name="Weissman K.J."/>
            <person name="Welch R.D."/>
            <person name="Wenzel S.C."/>
            <person name="Whitworth D.E."/>
            <person name="Wilhelm S."/>
            <person name="Wittmann C."/>
            <person name="Bloecker H."/>
            <person name="Puehler A."/>
            <person name="Mueller R."/>
        </authorList>
    </citation>
    <scope>NUCLEOTIDE SEQUENCE [LARGE SCALE GENOMIC DNA]</scope>
    <source>
        <strain>So ce56</strain>
    </source>
</reference>
<protein>
    <recommendedName>
        <fullName evidence="1">ATP synthase subunit alpha</fullName>
        <ecNumber evidence="1">7.1.2.2</ecNumber>
    </recommendedName>
    <alternativeName>
        <fullName evidence="1">ATP synthase F1 sector subunit alpha</fullName>
    </alternativeName>
    <alternativeName>
        <fullName evidence="1">F-ATPase subunit alpha</fullName>
    </alternativeName>
</protein>